<evidence type="ECO:0000255" key="1">
    <source>
        <dbReference type="HAMAP-Rule" id="MF_01337"/>
    </source>
</evidence>
<evidence type="ECO:0000256" key="2">
    <source>
        <dbReference type="SAM" id="MobiDB-lite"/>
    </source>
</evidence>
<evidence type="ECO:0000305" key="3"/>
<keyword id="KW-0687">Ribonucleoprotein</keyword>
<keyword id="KW-0689">Ribosomal protein</keyword>
<keyword id="KW-0694">RNA-binding</keyword>
<keyword id="KW-0699">rRNA-binding</keyword>
<name>RL18_MICAN</name>
<dbReference type="EMBL" id="AP009552">
    <property type="protein sequence ID" value="BAG05550.1"/>
    <property type="molecule type" value="Genomic_DNA"/>
</dbReference>
<dbReference type="RefSeq" id="WP_002753900.1">
    <property type="nucleotide sequence ID" value="NC_010296.1"/>
</dbReference>
<dbReference type="SMR" id="B0JHY8"/>
<dbReference type="STRING" id="449447.MAE_57280"/>
<dbReference type="PaxDb" id="449447-MAE_57280"/>
<dbReference type="EnsemblBacteria" id="BAG05550">
    <property type="protein sequence ID" value="BAG05550"/>
    <property type="gene ID" value="MAE_57280"/>
</dbReference>
<dbReference type="GeneID" id="66707886"/>
<dbReference type="KEGG" id="mar:MAE_57280"/>
<dbReference type="eggNOG" id="COG0256">
    <property type="taxonomic scope" value="Bacteria"/>
</dbReference>
<dbReference type="HOGENOM" id="CLU_098841_0_1_3"/>
<dbReference type="BioCyc" id="MAER449447:MAE_RS24955-MONOMER"/>
<dbReference type="Proteomes" id="UP000001510">
    <property type="component" value="Chromosome"/>
</dbReference>
<dbReference type="GO" id="GO:0022625">
    <property type="term" value="C:cytosolic large ribosomal subunit"/>
    <property type="evidence" value="ECO:0007669"/>
    <property type="project" value="TreeGrafter"/>
</dbReference>
<dbReference type="GO" id="GO:0008097">
    <property type="term" value="F:5S rRNA binding"/>
    <property type="evidence" value="ECO:0007669"/>
    <property type="project" value="TreeGrafter"/>
</dbReference>
<dbReference type="GO" id="GO:0003735">
    <property type="term" value="F:structural constituent of ribosome"/>
    <property type="evidence" value="ECO:0007669"/>
    <property type="project" value="InterPro"/>
</dbReference>
<dbReference type="GO" id="GO:0006412">
    <property type="term" value="P:translation"/>
    <property type="evidence" value="ECO:0007669"/>
    <property type="project" value="UniProtKB-UniRule"/>
</dbReference>
<dbReference type="CDD" id="cd00432">
    <property type="entry name" value="Ribosomal_L18_L5e"/>
    <property type="match status" value="1"/>
</dbReference>
<dbReference type="FunFam" id="3.30.420.100:FF:000001">
    <property type="entry name" value="50S ribosomal protein L18"/>
    <property type="match status" value="1"/>
</dbReference>
<dbReference type="Gene3D" id="3.30.420.100">
    <property type="match status" value="1"/>
</dbReference>
<dbReference type="HAMAP" id="MF_01337_B">
    <property type="entry name" value="Ribosomal_uL18_B"/>
    <property type="match status" value="1"/>
</dbReference>
<dbReference type="InterPro" id="IPR004389">
    <property type="entry name" value="Ribosomal_uL18_bac-type"/>
</dbReference>
<dbReference type="InterPro" id="IPR005484">
    <property type="entry name" value="Ribosomal_uL18_bac/euk"/>
</dbReference>
<dbReference type="NCBIfam" id="TIGR00060">
    <property type="entry name" value="L18_bact"/>
    <property type="match status" value="1"/>
</dbReference>
<dbReference type="PANTHER" id="PTHR12899">
    <property type="entry name" value="39S RIBOSOMAL PROTEIN L18, MITOCHONDRIAL"/>
    <property type="match status" value="1"/>
</dbReference>
<dbReference type="PANTHER" id="PTHR12899:SF3">
    <property type="entry name" value="LARGE RIBOSOMAL SUBUNIT PROTEIN UL18M"/>
    <property type="match status" value="1"/>
</dbReference>
<dbReference type="Pfam" id="PF00861">
    <property type="entry name" value="Ribosomal_L18p"/>
    <property type="match status" value="1"/>
</dbReference>
<dbReference type="SUPFAM" id="SSF53137">
    <property type="entry name" value="Translational machinery components"/>
    <property type="match status" value="1"/>
</dbReference>
<sequence length="120" mass="13249">MKLSRKESVRRRHQRVRRKINGTAERPRLSVFRSNNHIYAQIIDDVAQHTLAAASTLEATLRGELESTATQEASAAVGKLVAQRALDKGIEQVVFDRGGNLYHGRVKALAEAARSAGLNF</sequence>
<protein>
    <recommendedName>
        <fullName evidence="1">Large ribosomal subunit protein uL18</fullName>
    </recommendedName>
    <alternativeName>
        <fullName evidence="3">50S ribosomal protein L18</fullName>
    </alternativeName>
</protein>
<comment type="function">
    <text evidence="1">This is one of the proteins that bind and probably mediate the attachment of the 5S RNA into the large ribosomal subunit, where it forms part of the central protuberance.</text>
</comment>
<comment type="subunit">
    <text evidence="1">Part of the 50S ribosomal subunit; part of the 5S rRNA/L5/L18/L25 subcomplex. Contacts the 5S and 23S rRNAs.</text>
</comment>
<comment type="similarity">
    <text evidence="1">Belongs to the universal ribosomal protein uL18 family.</text>
</comment>
<organism>
    <name type="scientific">Microcystis aeruginosa (strain NIES-843 / IAM M-2473)</name>
    <dbReference type="NCBI Taxonomy" id="449447"/>
    <lineage>
        <taxon>Bacteria</taxon>
        <taxon>Bacillati</taxon>
        <taxon>Cyanobacteriota</taxon>
        <taxon>Cyanophyceae</taxon>
        <taxon>Oscillatoriophycideae</taxon>
        <taxon>Chroococcales</taxon>
        <taxon>Microcystaceae</taxon>
        <taxon>Microcystis</taxon>
    </lineage>
</organism>
<reference key="1">
    <citation type="journal article" date="2007" name="DNA Res.">
        <title>Complete genomic structure of the bloom-forming toxic cyanobacterium Microcystis aeruginosa NIES-843.</title>
        <authorList>
            <person name="Kaneko T."/>
            <person name="Nakajima N."/>
            <person name="Okamoto S."/>
            <person name="Suzuki I."/>
            <person name="Tanabe Y."/>
            <person name="Tamaoki M."/>
            <person name="Nakamura Y."/>
            <person name="Kasai F."/>
            <person name="Watanabe A."/>
            <person name="Kawashima K."/>
            <person name="Kishida Y."/>
            <person name="Ono A."/>
            <person name="Shimizu Y."/>
            <person name="Takahashi C."/>
            <person name="Minami C."/>
            <person name="Fujishiro T."/>
            <person name="Kohara M."/>
            <person name="Katoh M."/>
            <person name="Nakazaki N."/>
            <person name="Nakayama S."/>
            <person name="Yamada M."/>
            <person name="Tabata S."/>
            <person name="Watanabe M.M."/>
        </authorList>
    </citation>
    <scope>NUCLEOTIDE SEQUENCE [LARGE SCALE GENOMIC DNA]</scope>
    <source>
        <strain>NIES-843 / IAM M-247</strain>
    </source>
</reference>
<proteinExistence type="inferred from homology"/>
<gene>
    <name evidence="1" type="primary">rplR</name>
    <name evidence="1" type="synonym">rpl18</name>
    <name type="ordered locus">MAE_57280</name>
</gene>
<feature type="chain" id="PRO_1000086672" description="Large ribosomal subunit protein uL18">
    <location>
        <begin position="1"/>
        <end position="120"/>
    </location>
</feature>
<feature type="region of interest" description="Disordered" evidence="2">
    <location>
        <begin position="1"/>
        <end position="23"/>
    </location>
</feature>
<feature type="compositionally biased region" description="Basic residues" evidence="2">
    <location>
        <begin position="8"/>
        <end position="20"/>
    </location>
</feature>
<accession>B0JHY8</accession>